<comment type="function">
    <text evidence="1">Catalyzes the deamination of three SAM-derived enzymatic products, namely 5'-deoxyadenosine, S-adenosyl-L-homocysteine, and 5'-methylthioadenosine, to produce the inosine analogs. Can also deaminate adenosine. The preferred substrate for this enzyme is 5'-deoxyadenosine, but all these substrates are efficiently deaminated. Likely functions in a S-adenosyl-L-methionine (SAM) recycling pathway from S-adenosyl-L-homocysteine (SAH) produced from SAM-dependent methylation reactions. May also be involved in the recycling of 5'-deoxyadenosine, whereupon the 5'-deoxyribose moiety of 5'-deoxyinosine is further metabolized to deoxyhexoses used for the biosynthesis of aromatic amino acids in methanogens.</text>
</comment>
<comment type="catalytic activity">
    <reaction evidence="1">
        <text>5'-deoxyadenosine + H2O + H(+) = 5'-deoxyinosine + NH4(+)</text>
        <dbReference type="Rhea" id="RHEA:42892"/>
        <dbReference type="ChEBI" id="CHEBI:15377"/>
        <dbReference type="ChEBI" id="CHEBI:15378"/>
        <dbReference type="ChEBI" id="CHEBI:17319"/>
        <dbReference type="ChEBI" id="CHEBI:28938"/>
        <dbReference type="ChEBI" id="CHEBI:82775"/>
        <dbReference type="EC" id="3.5.4.41"/>
    </reaction>
    <physiologicalReaction direction="left-to-right" evidence="1">
        <dbReference type="Rhea" id="RHEA:42893"/>
    </physiologicalReaction>
</comment>
<comment type="catalytic activity">
    <reaction evidence="1">
        <text>S-adenosyl-L-homocysteine + H2O + H(+) = S-inosyl-L-homocysteine + NH4(+)</text>
        <dbReference type="Rhea" id="RHEA:20716"/>
        <dbReference type="ChEBI" id="CHEBI:15377"/>
        <dbReference type="ChEBI" id="CHEBI:15378"/>
        <dbReference type="ChEBI" id="CHEBI:28938"/>
        <dbReference type="ChEBI" id="CHEBI:57856"/>
        <dbReference type="ChEBI" id="CHEBI:57985"/>
        <dbReference type="EC" id="3.5.4.28"/>
    </reaction>
    <physiologicalReaction direction="left-to-right" evidence="1">
        <dbReference type="Rhea" id="RHEA:20717"/>
    </physiologicalReaction>
</comment>
<comment type="catalytic activity">
    <reaction evidence="1">
        <text>S-methyl-5'-thioadenosine + H2O + H(+) = S-methyl-5'-thioinosine + NH4(+)</text>
        <dbReference type="Rhea" id="RHEA:25025"/>
        <dbReference type="ChEBI" id="CHEBI:15377"/>
        <dbReference type="ChEBI" id="CHEBI:15378"/>
        <dbReference type="ChEBI" id="CHEBI:17509"/>
        <dbReference type="ChEBI" id="CHEBI:28938"/>
        <dbReference type="ChEBI" id="CHEBI:48595"/>
        <dbReference type="EC" id="3.5.4.31"/>
    </reaction>
    <physiologicalReaction direction="left-to-right" evidence="1">
        <dbReference type="Rhea" id="RHEA:25026"/>
    </physiologicalReaction>
</comment>
<comment type="catalytic activity">
    <reaction evidence="1">
        <text>adenosine + H2O + H(+) = inosine + NH4(+)</text>
        <dbReference type="Rhea" id="RHEA:24408"/>
        <dbReference type="ChEBI" id="CHEBI:15377"/>
        <dbReference type="ChEBI" id="CHEBI:15378"/>
        <dbReference type="ChEBI" id="CHEBI:16335"/>
        <dbReference type="ChEBI" id="CHEBI:17596"/>
        <dbReference type="ChEBI" id="CHEBI:28938"/>
        <dbReference type="EC" id="3.5.4.4"/>
    </reaction>
    <physiologicalReaction direction="left-to-right" evidence="1">
        <dbReference type="Rhea" id="RHEA:24409"/>
    </physiologicalReaction>
</comment>
<comment type="cofactor">
    <cofactor evidence="1">
        <name>Zn(2+)</name>
        <dbReference type="ChEBI" id="CHEBI:29105"/>
    </cofactor>
    <text evidence="1">Binds 1 zinc ion per subunit.</text>
</comment>
<comment type="pathway">
    <text evidence="1">Amino-acid biosynthesis; S-adenosyl-L-methionine biosynthesis.</text>
</comment>
<comment type="subunit">
    <text evidence="1">Homotetramer.</text>
</comment>
<comment type="miscellaneous">
    <text evidence="1">SAH is a product of SAM methyltransferases and is known to be a feedback inhibitor of these enzymes. As a result of this inhibition, organisms have evolved efficient enzymes to metabolize SAH via different pathways. The pathway found in methanogens differs from the canonical pathway, it uses the deamination of S-adenosyl-L-homocysteine to form S-inosyl-L-homocysteine for the regeneration of SAM from S-adenosyl-L-homocysteine. 5'-deoxyadenosine is a radical SAM enzyme reaction product which strongly inhibits radical SAM enzymes. A pathway for removing this product must be present in methanogens where the MTA/SAH nucleosidase which normally metabolizes this compound is absent.</text>
</comment>
<comment type="similarity">
    <text evidence="1">Belongs to the metallo-dependent hydrolases superfamily. MTA/SAH deaminase family.</text>
</comment>
<accession>Q6LX61</accession>
<protein>
    <recommendedName>
        <fullName evidence="1">5'-deoxyadenosine deaminase</fullName>
        <shortName evidence="1">5'-dA deaminase</shortName>
        <ecNumber evidence="1">3.5.4.41</ecNumber>
    </recommendedName>
    <alternativeName>
        <fullName evidence="1">5'-methylthioadenosine deaminase</fullName>
        <shortName evidence="1">MTA deaminase</shortName>
        <ecNumber evidence="1">3.5.4.31</ecNumber>
    </alternativeName>
    <alternativeName>
        <fullName evidence="1">Adenosine deaminase</fullName>
        <ecNumber evidence="1">3.5.4.4</ecNumber>
    </alternativeName>
    <alternativeName>
        <fullName evidence="1">S-adenosylhomocysteine deaminase</fullName>
        <shortName evidence="1">SAH deaminase</shortName>
        <ecNumber evidence="1">3.5.4.28</ecNumber>
    </alternativeName>
</protein>
<sequence>MILVKDAIITGKKQDLLVEGNIIKKIGNISISEVSKDETEIIDGKNCVLIPGLINTHTHVPMSLFRGVADDIPLMEWLSGHIWPMESKLNEKIVYAGTLLGTIEMIKSGTTAFNDMYFFLDSIIKAVDETGIRSTIAYGMIDLFDEEKREKELKTAKESLEMIKNLNNSRITGALGPHAPYTCSKEILESTNALAREYNVPIHIHMNETLDEINQVVEKTGMRPFEYLNSFGFFDNVNTICAHCVHLSASEIQIMKEKNIFAAHNPVSNLKLASGVSPVLKLLENNIPVTLGTDGCGSNNNMNLFEEIKAAALIHKGVNLNPVAVIAKDAFDFGTKNGAKALNINSGEIKEGKLADFVLINMKKPYLTPKENIESHLVYSFNGVVDKVVIDGKLVLNDGKMVNIDEEKVYEIAEEAYFELAN</sequence>
<evidence type="ECO:0000255" key="1">
    <source>
        <dbReference type="HAMAP-Rule" id="MF_01281"/>
    </source>
</evidence>
<dbReference type="EC" id="3.5.4.41" evidence="1"/>
<dbReference type="EC" id="3.5.4.31" evidence="1"/>
<dbReference type="EC" id="3.5.4.4" evidence="1"/>
<dbReference type="EC" id="3.5.4.28" evidence="1"/>
<dbReference type="EMBL" id="BX950229">
    <property type="protein sequence ID" value="CAF31047.1"/>
    <property type="molecule type" value="Genomic_DNA"/>
</dbReference>
<dbReference type="RefSeq" id="WP_011171435.1">
    <property type="nucleotide sequence ID" value="NC_005791.1"/>
</dbReference>
<dbReference type="SMR" id="Q6LX61"/>
<dbReference type="STRING" id="267377.MMP1491"/>
<dbReference type="DNASU" id="2761249"/>
<dbReference type="EnsemblBacteria" id="CAF31047">
    <property type="protein sequence ID" value="CAF31047"/>
    <property type="gene ID" value="MMP1491"/>
</dbReference>
<dbReference type="GeneID" id="2761249"/>
<dbReference type="KEGG" id="mmp:MMP1491"/>
<dbReference type="PATRIC" id="fig|267377.15.peg.1528"/>
<dbReference type="eggNOG" id="arCOG00695">
    <property type="taxonomic scope" value="Archaea"/>
</dbReference>
<dbReference type="HOGENOM" id="CLU_012358_2_1_2"/>
<dbReference type="OrthoDB" id="372084at2157"/>
<dbReference type="UniPathway" id="UPA00315"/>
<dbReference type="Proteomes" id="UP000000590">
    <property type="component" value="Chromosome"/>
</dbReference>
<dbReference type="GO" id="GO:0090613">
    <property type="term" value="F:5'-deoxyadenosine deaminase activity"/>
    <property type="evidence" value="ECO:0007669"/>
    <property type="project" value="UniProtKB-UniRule"/>
</dbReference>
<dbReference type="GO" id="GO:0090614">
    <property type="term" value="F:5'-methylthioadenosine deaminase activity"/>
    <property type="evidence" value="ECO:0007669"/>
    <property type="project" value="UniProtKB-EC"/>
</dbReference>
<dbReference type="GO" id="GO:0004000">
    <property type="term" value="F:adenosine deaminase activity"/>
    <property type="evidence" value="ECO:0007669"/>
    <property type="project" value="UniProtKB-UniRule"/>
</dbReference>
<dbReference type="GO" id="GO:0046872">
    <property type="term" value="F:metal ion binding"/>
    <property type="evidence" value="ECO:0007669"/>
    <property type="project" value="UniProtKB-KW"/>
</dbReference>
<dbReference type="GO" id="GO:0050270">
    <property type="term" value="F:S-adenosylhomocysteine deaminase activity"/>
    <property type="evidence" value="ECO:0007669"/>
    <property type="project" value="UniProtKB-EC"/>
</dbReference>
<dbReference type="GO" id="GO:0006556">
    <property type="term" value="P:S-adenosylmethionine biosynthetic process"/>
    <property type="evidence" value="ECO:0007669"/>
    <property type="project" value="UniProtKB-UniRule"/>
</dbReference>
<dbReference type="CDD" id="cd01298">
    <property type="entry name" value="ATZ_TRZ_like"/>
    <property type="match status" value="1"/>
</dbReference>
<dbReference type="FunFam" id="3.20.20.140:FF:000014">
    <property type="entry name" value="5-methylthioadenosine/S-adenosylhomocysteine deaminase"/>
    <property type="match status" value="1"/>
</dbReference>
<dbReference type="Gene3D" id="3.20.20.140">
    <property type="entry name" value="Metal-dependent hydrolases"/>
    <property type="match status" value="1"/>
</dbReference>
<dbReference type="Gene3D" id="2.30.40.10">
    <property type="entry name" value="Urease, subunit C, domain 1"/>
    <property type="match status" value="1"/>
</dbReference>
<dbReference type="HAMAP" id="MF_01281">
    <property type="entry name" value="MTA_SAH_deamin"/>
    <property type="match status" value="1"/>
</dbReference>
<dbReference type="InterPro" id="IPR006680">
    <property type="entry name" value="Amidohydro-rel"/>
</dbReference>
<dbReference type="InterPro" id="IPR023512">
    <property type="entry name" value="Deaminase_MtaD/DadD"/>
</dbReference>
<dbReference type="InterPro" id="IPR011059">
    <property type="entry name" value="Metal-dep_hydrolase_composite"/>
</dbReference>
<dbReference type="InterPro" id="IPR032466">
    <property type="entry name" value="Metal_Hydrolase"/>
</dbReference>
<dbReference type="InterPro" id="IPR050287">
    <property type="entry name" value="MTA/SAH_deaminase"/>
</dbReference>
<dbReference type="PANTHER" id="PTHR43794:SF11">
    <property type="entry name" value="AMIDOHYDROLASE-RELATED DOMAIN-CONTAINING PROTEIN"/>
    <property type="match status" value="1"/>
</dbReference>
<dbReference type="PANTHER" id="PTHR43794">
    <property type="entry name" value="AMINOHYDROLASE SSNA-RELATED"/>
    <property type="match status" value="1"/>
</dbReference>
<dbReference type="Pfam" id="PF01979">
    <property type="entry name" value="Amidohydro_1"/>
    <property type="match status" value="1"/>
</dbReference>
<dbReference type="SUPFAM" id="SSF51338">
    <property type="entry name" value="Composite domain of metallo-dependent hydrolases"/>
    <property type="match status" value="1"/>
</dbReference>
<dbReference type="SUPFAM" id="SSF51556">
    <property type="entry name" value="Metallo-dependent hydrolases"/>
    <property type="match status" value="1"/>
</dbReference>
<gene>
    <name evidence="1" type="primary">dadD</name>
    <name type="ordered locus">MMP1491</name>
</gene>
<reference key="1">
    <citation type="journal article" date="2004" name="J. Bacteriol.">
        <title>Complete genome sequence of the genetically tractable hydrogenotrophic methanogen Methanococcus maripaludis.</title>
        <authorList>
            <person name="Hendrickson E.L."/>
            <person name="Kaul R."/>
            <person name="Zhou Y."/>
            <person name="Bovee D."/>
            <person name="Chapman P."/>
            <person name="Chung J."/>
            <person name="Conway de Macario E."/>
            <person name="Dodsworth J.A."/>
            <person name="Gillett W."/>
            <person name="Graham D.E."/>
            <person name="Hackett M."/>
            <person name="Haydock A.K."/>
            <person name="Kang A."/>
            <person name="Land M.L."/>
            <person name="Levy R."/>
            <person name="Lie T.J."/>
            <person name="Major T.A."/>
            <person name="Moore B.C."/>
            <person name="Porat I."/>
            <person name="Palmeiri A."/>
            <person name="Rouse G."/>
            <person name="Saenphimmachak C."/>
            <person name="Soell D."/>
            <person name="Van Dien S."/>
            <person name="Wang T."/>
            <person name="Whitman W.B."/>
            <person name="Xia Q."/>
            <person name="Zhang Y."/>
            <person name="Larimer F.W."/>
            <person name="Olson M.V."/>
            <person name="Leigh J.A."/>
        </authorList>
    </citation>
    <scope>NUCLEOTIDE SEQUENCE [LARGE SCALE GENOMIC DNA]</scope>
    <source>
        <strain>DSM 14266 / JCM 13030 / NBRC 101832 / S2 / LL</strain>
    </source>
</reference>
<name>DADD_METMP</name>
<proteinExistence type="inferred from homology"/>
<feature type="chain" id="PRO_0000312472" description="5'-deoxyadenosine deaminase">
    <location>
        <begin position="1"/>
        <end position="422"/>
    </location>
</feature>
<feature type="binding site" evidence="1">
    <location>
        <position position="57"/>
    </location>
    <ligand>
        <name>Zn(2+)</name>
        <dbReference type="ChEBI" id="CHEBI:29105"/>
    </ligand>
</feature>
<feature type="binding site" evidence="1">
    <location>
        <position position="59"/>
    </location>
    <ligand>
        <name>Zn(2+)</name>
        <dbReference type="ChEBI" id="CHEBI:29105"/>
    </ligand>
</feature>
<feature type="binding site" evidence="1">
    <location>
        <position position="86"/>
    </location>
    <ligand>
        <name>substrate</name>
    </ligand>
</feature>
<feature type="binding site" evidence="1">
    <location>
        <position position="178"/>
    </location>
    <ligand>
        <name>substrate</name>
    </ligand>
</feature>
<feature type="binding site" evidence="1">
    <location>
        <position position="205"/>
    </location>
    <ligand>
        <name>Zn(2+)</name>
        <dbReference type="ChEBI" id="CHEBI:29105"/>
    </ligand>
</feature>
<feature type="binding site" evidence="1">
    <location>
        <position position="208"/>
    </location>
    <ligand>
        <name>substrate</name>
    </ligand>
</feature>
<feature type="binding site" evidence="1">
    <location>
        <position position="294"/>
    </location>
    <ligand>
        <name>substrate</name>
    </ligand>
</feature>
<feature type="binding site" evidence="1">
    <location>
        <position position="294"/>
    </location>
    <ligand>
        <name>Zn(2+)</name>
        <dbReference type="ChEBI" id="CHEBI:29105"/>
    </ligand>
</feature>
<organism>
    <name type="scientific">Methanococcus maripaludis (strain DSM 14266 / JCM 13030 / NBRC 101832 / S2 / LL)</name>
    <dbReference type="NCBI Taxonomy" id="267377"/>
    <lineage>
        <taxon>Archaea</taxon>
        <taxon>Methanobacteriati</taxon>
        <taxon>Methanobacteriota</taxon>
        <taxon>Methanomada group</taxon>
        <taxon>Methanococci</taxon>
        <taxon>Methanococcales</taxon>
        <taxon>Methanococcaceae</taxon>
        <taxon>Methanococcus</taxon>
    </lineage>
</organism>
<keyword id="KW-0378">Hydrolase</keyword>
<keyword id="KW-0479">Metal-binding</keyword>
<keyword id="KW-1185">Reference proteome</keyword>
<keyword id="KW-0862">Zinc</keyword>